<accession>P62327</accession>
<accession>P01253</accession>
<accession>P01254</accession>
<accession>Q63576</accession>
<accession>Q6X9X4</accession>
<gene>
    <name type="primary">TMSB4</name>
    <name type="synonym">THYB4</name>
</gene>
<feature type="initiator methionine" description="Removed" evidence="4">
    <location>
        <position position="1"/>
    </location>
</feature>
<feature type="chain" id="PRO_0000045919" description="Thymosin beta-4" evidence="4">
    <location>
        <begin position="2"/>
        <end position="44"/>
    </location>
</feature>
<feature type="peptide" id="PRO_0000034294" description="Hemoregulatory peptide AcSDKP" evidence="1">
    <location>
        <begin position="2"/>
        <end position="5"/>
    </location>
</feature>
<feature type="region of interest" description="Disordered" evidence="3">
    <location>
        <begin position="1"/>
        <end position="44"/>
    </location>
</feature>
<feature type="compositionally biased region" description="Basic and acidic residues" evidence="3">
    <location>
        <begin position="1"/>
        <end position="25"/>
    </location>
</feature>
<feature type="compositionally biased region" description="Basic and acidic residues" evidence="3">
    <location>
        <begin position="33"/>
        <end position="44"/>
    </location>
</feature>
<feature type="modified residue" description="N-acetylserine" evidence="1">
    <location>
        <position position="2"/>
    </location>
</feature>
<feature type="modified residue" description="Phosphoserine" evidence="2">
    <location>
        <position position="2"/>
    </location>
</feature>
<feature type="modified residue" description="N6-acetyllysine" evidence="2">
    <location>
        <position position="4"/>
    </location>
</feature>
<feature type="modified residue" description="N6-acetyllysine; alternate" evidence="2">
    <location>
        <position position="12"/>
    </location>
</feature>
<feature type="modified residue" description="Phosphothreonine" evidence="2">
    <location>
        <position position="23"/>
    </location>
</feature>
<feature type="modified residue" description="N6-acetyllysine" evidence="2">
    <location>
        <position position="26"/>
    </location>
</feature>
<feature type="modified residue" description="Phosphoserine" evidence="2">
    <location>
        <position position="31"/>
    </location>
</feature>
<feature type="modified residue" description="N6-acetyllysine" evidence="2">
    <location>
        <position position="32"/>
    </location>
</feature>
<feature type="modified residue" description="Phosphothreonine" evidence="2">
    <location>
        <position position="34"/>
    </location>
</feature>
<feature type="modified residue" description="N6-acetyllysine" evidence="2">
    <location>
        <position position="39"/>
    </location>
</feature>
<feature type="cross-link" description="Glycyl lysine isopeptide (Lys-Gly) (interchain with G-Cter in SUMO2); alternate" evidence="2">
    <location>
        <position position="12"/>
    </location>
</feature>
<organism>
    <name type="scientific">Equus caballus</name>
    <name type="common">Horse</name>
    <dbReference type="NCBI Taxonomy" id="9796"/>
    <lineage>
        <taxon>Eukaryota</taxon>
        <taxon>Metazoa</taxon>
        <taxon>Chordata</taxon>
        <taxon>Craniata</taxon>
        <taxon>Vertebrata</taxon>
        <taxon>Euteleostomi</taxon>
        <taxon>Mammalia</taxon>
        <taxon>Eutheria</taxon>
        <taxon>Laurasiatheria</taxon>
        <taxon>Perissodactyla</taxon>
        <taxon>Equidae</taxon>
        <taxon>Equus</taxon>
    </lineage>
</organism>
<keyword id="KW-0007">Acetylation</keyword>
<keyword id="KW-0009">Actin-binding</keyword>
<keyword id="KW-0963">Cytoplasm</keyword>
<keyword id="KW-0206">Cytoskeleton</keyword>
<keyword id="KW-0903">Direct protein sequencing</keyword>
<keyword id="KW-1017">Isopeptide bond</keyword>
<keyword id="KW-0597">Phosphoprotein</keyword>
<keyword id="KW-1185">Reference proteome</keyword>
<keyword id="KW-0832">Ubl conjugation</keyword>
<proteinExistence type="evidence at protein level"/>
<dbReference type="EMBL" id="AY246744">
    <property type="protein sequence ID" value="AAP78720.1"/>
    <property type="molecule type" value="mRNA"/>
</dbReference>
<dbReference type="RefSeq" id="NP_001157420.1">
    <property type="nucleotide sequence ID" value="NM_001163948.1"/>
</dbReference>
<dbReference type="BMRB" id="P62327"/>
<dbReference type="SMR" id="P62327"/>
<dbReference type="FunCoup" id="P62327">
    <property type="interactions" value="367"/>
</dbReference>
<dbReference type="STRING" id="9796.ENSECAP00000007110"/>
<dbReference type="PaxDb" id="9796-ENSECAP00000007110"/>
<dbReference type="PeptideAtlas" id="P62327"/>
<dbReference type="GeneID" id="100034015"/>
<dbReference type="KEGG" id="ecb:100034015"/>
<dbReference type="CTD" id="7114"/>
<dbReference type="HOGENOM" id="CLU_208046_0_0_1"/>
<dbReference type="InParanoid" id="P62327"/>
<dbReference type="OrthoDB" id="2151618at2759"/>
<dbReference type="Proteomes" id="UP000002281">
    <property type="component" value="Unplaced"/>
</dbReference>
<dbReference type="GO" id="GO:0005737">
    <property type="term" value="C:cytoplasm"/>
    <property type="evidence" value="ECO:0000318"/>
    <property type="project" value="GO_Central"/>
</dbReference>
<dbReference type="GO" id="GO:0005856">
    <property type="term" value="C:cytoskeleton"/>
    <property type="evidence" value="ECO:0007669"/>
    <property type="project" value="UniProtKB-SubCell"/>
</dbReference>
<dbReference type="GO" id="GO:0003785">
    <property type="term" value="F:actin monomer binding"/>
    <property type="evidence" value="ECO:0000318"/>
    <property type="project" value="GO_Central"/>
</dbReference>
<dbReference type="GO" id="GO:0007015">
    <property type="term" value="P:actin filament organization"/>
    <property type="evidence" value="ECO:0007669"/>
    <property type="project" value="InterPro"/>
</dbReference>
<dbReference type="GO" id="GO:0030334">
    <property type="term" value="P:regulation of cell migration"/>
    <property type="evidence" value="ECO:0000318"/>
    <property type="project" value="GO_Central"/>
</dbReference>
<dbReference type="CDD" id="cd22059">
    <property type="entry name" value="WH2_BetaT"/>
    <property type="match status" value="1"/>
</dbReference>
<dbReference type="FunFam" id="1.20.5.520:FF:000001">
    <property type="entry name" value="Thymosin beta"/>
    <property type="match status" value="1"/>
</dbReference>
<dbReference type="Gene3D" id="1.20.5.520">
    <property type="entry name" value="Single helix bin"/>
    <property type="match status" value="1"/>
</dbReference>
<dbReference type="InterPro" id="IPR001152">
    <property type="entry name" value="Beta-thymosin"/>
</dbReference>
<dbReference type="InterPro" id="IPR038386">
    <property type="entry name" value="Beta-thymosin_sf"/>
</dbReference>
<dbReference type="PANTHER" id="PTHR12021">
    <property type="entry name" value="THYMOSIN BETA"/>
    <property type="match status" value="1"/>
</dbReference>
<dbReference type="PANTHER" id="PTHR12021:SF20">
    <property type="entry name" value="THYMOSIN BETA-4"/>
    <property type="match status" value="1"/>
</dbReference>
<dbReference type="Pfam" id="PF01290">
    <property type="entry name" value="Thymosin"/>
    <property type="match status" value="1"/>
</dbReference>
<dbReference type="PIRSF" id="PIRSF001828">
    <property type="entry name" value="Thymosin_beta"/>
    <property type="match status" value="1"/>
</dbReference>
<dbReference type="SMART" id="SM00152">
    <property type="entry name" value="THY"/>
    <property type="match status" value="1"/>
</dbReference>
<dbReference type="PROSITE" id="PS00500">
    <property type="entry name" value="THYMOSIN_B4"/>
    <property type="match status" value="1"/>
</dbReference>
<sequence>MSDKPDMAEIEKFDKSKLKKTETQEKNPLPSKETIEQEKQAGES</sequence>
<evidence type="ECO:0000250" key="1">
    <source>
        <dbReference type="UniProtKB" id="P62326"/>
    </source>
</evidence>
<evidence type="ECO:0000250" key="2">
    <source>
        <dbReference type="UniProtKB" id="P62328"/>
    </source>
</evidence>
<evidence type="ECO:0000256" key="3">
    <source>
        <dbReference type="SAM" id="MobiDB-lite"/>
    </source>
</evidence>
<evidence type="ECO:0000269" key="4">
    <source ref="1"/>
</evidence>
<evidence type="ECO:0000305" key="5"/>
<reference key="1">
    <citation type="book" date="1993" name="Peptides 1992">
        <title>Isolation and structural identification of beta-thymosins from equine tissue: development of a specific ELISA against thymosin beta-10 (TBeta-10).</title>
        <editorList>
            <person name="Schneider C.H."/>
            <person name="Eberles A.N."/>
        </editorList>
        <authorList>
            <person name="Hoerger S."/>
            <person name="Gallert B."/>
            <person name="Kellerman J."/>
            <person name="Voelter W."/>
        </authorList>
    </citation>
    <scope>PROTEIN SEQUENCE OF 2-44</scope>
    <source>
        <tissue>Spleen</tissue>
    </source>
</reference>
<reference key="2">
    <citation type="submission" date="2003-02" db="EMBL/GenBank/DDBJ databases">
        <title>Expression analysis of equine interleukin-1b treated equine synovium using suppression subtractive hybridization analysis (SSH-PCR).</title>
        <authorList>
            <person name="Takafuji V.A."/>
            <person name="Crisman M.V."/>
            <person name="Seat K.L."/>
            <person name="Sharova L.V."/>
            <person name="Ward D.L."/>
            <person name="Howard R.D."/>
        </authorList>
    </citation>
    <scope>NUCLEOTIDE SEQUENCE [MRNA] OF 6-44</scope>
</reference>
<protein>
    <recommendedName>
        <fullName>Thymosin beta-4</fullName>
        <shortName>T beta-4</shortName>
    </recommendedName>
    <component>
        <recommendedName>
            <fullName evidence="5">Hemoregulatory peptide AcSDKP</fullName>
        </recommendedName>
        <alternativeName>
            <fullName>N-acetyl-SDKP</fullName>
            <shortName>AcSDKP</shortName>
        </alternativeName>
        <alternativeName>
            <fullName evidence="2">Seraspenide</fullName>
        </alternativeName>
    </component>
</protein>
<comment type="function">
    <text evidence="2">Plays an important role in the organization of the cytoskeleton. Binds to and sequesters actin monomers (G actin) and therefore inhibits actin polymerization.</text>
</comment>
<comment type="function">
    <molecule>Hemoregulatory peptide AcSDKP</molecule>
    <text evidence="1">Potent inhibitor of bone marrow derived stem cell differentiation (By similarity). Acts by inhibits the entry of hematopoietic pluripotent stem cells into the S-phase (By similarity).</text>
</comment>
<comment type="subunit">
    <text evidence="1 2">Identified in a complex composed of ACTA1, COBL, GSN AND TMSB4X (By similarity). Interacts with SERPINB1 (By similarity).</text>
</comment>
<comment type="subcellular location">
    <subcellularLocation>
        <location evidence="2">Cytoplasm</location>
        <location evidence="2">Cytoskeleton</location>
    </subcellularLocation>
</comment>
<comment type="PTM">
    <molecule>Hemoregulatory peptide AcSDKP</molecule>
    <text evidence="2">AcSDKP is inactivated by ACE, which removes the dipeptide Lys-Pro from its C-terminus.</text>
</comment>
<comment type="similarity">
    <text evidence="5">Belongs to the thymosin beta family.</text>
</comment>
<name>TYB4_HORSE</name>